<gene>
    <name type="primary">sopA</name>
    <name type="ordered locus">SCH_2076</name>
</gene>
<accession>Q57MS9</accession>
<evidence type="ECO:0000250" key="1"/>
<evidence type="ECO:0000250" key="2">
    <source>
        <dbReference type="UniProtKB" id="Q8ZNR3"/>
    </source>
</evidence>
<evidence type="ECO:0000305" key="3"/>
<organism>
    <name type="scientific">Salmonella choleraesuis (strain SC-B67)</name>
    <dbReference type="NCBI Taxonomy" id="321314"/>
    <lineage>
        <taxon>Bacteria</taxon>
        <taxon>Pseudomonadati</taxon>
        <taxon>Pseudomonadota</taxon>
        <taxon>Gammaproteobacteria</taxon>
        <taxon>Enterobacterales</taxon>
        <taxon>Enterobacteriaceae</taxon>
        <taxon>Salmonella</taxon>
    </lineage>
</organism>
<sequence length="782" mass="86968">MKISSGAINFSTIPNQVKKLITSIREHTKNGFASKITSVKNTHASLNEKIKTGKSSSIEFALPQKIKDFFQPKDKNTLNKTLITVKNIKDTNNAGKINISAEDVSKMNAAFMRKHIANQSRDYNYRVTGAAPLPGGVSVSANNRPTVSEGRTPPVSPSLSLQATSFPSSPADWAKKLTDAVLRQKAGETLTAADRDFSNADFRNITFSKILPPSFMERDGDIIKGFNFSNSKFTYSDISHLHFDECRFTYSTLSDVVCSNTKFSNSDMNEVFLQYSITTQQQPSFIDTTLKNTLIRHKANLSGVILHEPDNSSPPSVSRGGNFIRLGDIWLQMPLLWTENAVDGFLNHEHNNGKSILMTIDSLPDKYSQEKVRAMEDLVKSLRGGRLTEAGIRPVESSLVSVLAHPPYTQSALISEWIRPVQERFFAHQCQTYNDVPLPAPDTYYQQRILPVLLDSFDRNSAAMTTHSGLFNQVILHCMTGVDCTDGTRQKAAALYEQYLAHPAVSPHIHNGLFGNYDGSPDWTTRAADNFLLLSSQDSDTAMMLSTNTLLTMLNPTPDTAWDNFYLLRAGENVSTAQISPVELFRHDFPVFLAAFNQQATQRRFGELIDIILSTEEHGELNQQFIAATNQKHSTVKLIDDASVSRLNTIFDPLLPEGKLSPAHYQHILSAYHLTDATPQKQAETLFCLSTAFARYSSSAIFGTEHDSPPALRGYAEALMQKAWELSPAIFPSSEQFTDWSDRFHGLHGAFTCTSVVADSMQRHARKYFPSVLSSILPLAWA</sequence>
<proteinExistence type="inferred from homology"/>
<feature type="chain" id="PRO_0000395850" description="E3 ubiquitin-protein ligase SopA">
    <location>
        <begin position="1"/>
        <end position="782"/>
    </location>
</feature>
<feature type="active site" description="Glycyl thioester intermediate" evidence="1">
    <location>
        <position position="753"/>
    </location>
</feature>
<protein>
    <recommendedName>
        <fullName>E3 ubiquitin-protein ligase SopA</fullName>
        <ecNumber>2.3.2.26</ecNumber>
    </recommendedName>
    <alternativeName>
        <fullName evidence="3">HECT-type E3 ubiquitin transferase SopA</fullName>
    </alternativeName>
    <alternativeName>
        <fullName>Salmonella outer protein A</fullName>
    </alternativeName>
    <alternativeName>
        <fullName>Secreted effector protein SopA</fullName>
    </alternativeName>
</protein>
<name>SOPA_SALCH</name>
<reference key="1">
    <citation type="journal article" date="2005" name="Nucleic Acids Res.">
        <title>The genome sequence of Salmonella enterica serovar Choleraesuis, a highly invasive and resistant zoonotic pathogen.</title>
        <authorList>
            <person name="Chiu C.-H."/>
            <person name="Tang P."/>
            <person name="Chu C."/>
            <person name="Hu S."/>
            <person name="Bao Q."/>
            <person name="Yu J."/>
            <person name="Chou Y.-Y."/>
            <person name="Wang H.-S."/>
            <person name="Lee Y.-S."/>
        </authorList>
    </citation>
    <scope>NUCLEOTIDE SEQUENCE [LARGE SCALE GENOMIC DNA]</scope>
    <source>
        <strain>SC-B67</strain>
    </source>
</reference>
<keyword id="KW-0964">Secreted</keyword>
<keyword id="KW-0808">Transferase</keyword>
<keyword id="KW-0832">Ubl conjugation</keyword>
<keyword id="KW-0833">Ubl conjugation pathway</keyword>
<keyword id="KW-0843">Virulence</keyword>
<comment type="function">
    <text evidence="2">Effector proteins function to alter host cell physiology and promote bacterial survival in host tissues. This protein is an E3 ubiquitin ligase that interferes with host's ubiquitination pathway.</text>
</comment>
<comment type="catalytic activity">
    <reaction>
        <text>S-ubiquitinyl-[E2 ubiquitin-conjugating enzyme]-L-cysteine + [acceptor protein]-L-lysine = [E2 ubiquitin-conjugating enzyme]-L-cysteine + N(6)-ubiquitinyl-[acceptor protein]-L-lysine.</text>
        <dbReference type="EC" id="2.3.2.26"/>
    </reaction>
</comment>
<comment type="subcellular location">
    <subcellularLocation>
        <location evidence="2">Secreted</location>
    </subcellularLocation>
    <subcellularLocation>
        <location evidence="2">Host cell</location>
    </subcellularLocation>
    <text evidence="2">Secreted via type III secretion system 1 (SPI-1 T3SS), and delivered into the host cell.</text>
</comment>
<comment type="PTM">
    <text evidence="2">Ubiquitinated in the presence of host E1 ubiquitin-activating enzyme, E2 ubiquitin-conjugating enzyme and ubiquitin.</text>
</comment>
<comment type="similarity">
    <text evidence="3">Belongs to the SopA E3 ligase family.</text>
</comment>
<comment type="sequence caution" evidence="3">
    <conflict type="frameshift">
        <sequence resource="EMBL-CDS" id="AAX65982"/>
    </conflict>
</comment>
<dbReference type="EC" id="2.3.2.26"/>
<dbReference type="EMBL" id="AE017220">
    <property type="protein sequence ID" value="AAX65982.1"/>
    <property type="status" value="ALT_FRAME"/>
    <property type="molecule type" value="Genomic_DNA"/>
</dbReference>
<dbReference type="SMR" id="Q57MS9"/>
<dbReference type="KEGG" id="sec:SCH_2076"/>
<dbReference type="HOGENOM" id="CLU_026158_0_0_6"/>
<dbReference type="Proteomes" id="UP000000538">
    <property type="component" value="Chromosome"/>
</dbReference>
<dbReference type="GO" id="GO:0005576">
    <property type="term" value="C:extracellular region"/>
    <property type="evidence" value="ECO:0000250"/>
    <property type="project" value="UniProtKB"/>
</dbReference>
<dbReference type="GO" id="GO:0043657">
    <property type="term" value="C:host cell"/>
    <property type="evidence" value="ECO:0007669"/>
    <property type="project" value="UniProtKB-SubCell"/>
</dbReference>
<dbReference type="GO" id="GO:0004842">
    <property type="term" value="F:ubiquitin-protein transferase activity"/>
    <property type="evidence" value="ECO:0000250"/>
    <property type="project" value="UniProtKB"/>
</dbReference>
<dbReference type="GO" id="GO:0016567">
    <property type="term" value="P:protein ubiquitination"/>
    <property type="evidence" value="ECO:0000250"/>
    <property type="project" value="UniProtKB"/>
</dbReference>
<dbReference type="FunFam" id="1.10.4140.10:FF:000001">
    <property type="entry name" value="SPI-1 type III secretion system effector HECT-type E3 ubiquitin transferase SopA"/>
    <property type="match status" value="1"/>
</dbReference>
<dbReference type="FunFam" id="1.25.40.300:FF:000001">
    <property type="entry name" value="SPI-1 type III secretion system effector HECT-type E3 ubiquitin transferase SopA"/>
    <property type="match status" value="1"/>
</dbReference>
<dbReference type="FunFam" id="2.160.20.80:FF:000005">
    <property type="entry name" value="SPI-1 type III secretion system effector HECT-type E3 ubiquitin transferase SopA"/>
    <property type="match status" value="1"/>
</dbReference>
<dbReference type="Gene3D" id="2.160.20.80">
    <property type="entry name" value="E3 ubiquitin-protein ligase SopA"/>
    <property type="match status" value="1"/>
</dbReference>
<dbReference type="Gene3D" id="1.10.4140.10">
    <property type="entry name" value="effector protein (NleL)"/>
    <property type="match status" value="1"/>
</dbReference>
<dbReference type="Gene3D" id="3.40.1850.10">
    <property type="entry name" value="HECT-like ubiquitin ligase"/>
    <property type="match status" value="1"/>
</dbReference>
<dbReference type="Gene3D" id="1.25.40.300">
    <property type="entry name" value="Putative secreted effector protein"/>
    <property type="match status" value="1"/>
</dbReference>
<dbReference type="InterPro" id="IPR025725">
    <property type="entry name" value="SopA-like_cat"/>
</dbReference>
<dbReference type="InterPro" id="IPR038270">
    <property type="entry name" value="SopA-like_catalytic_sf"/>
</dbReference>
<dbReference type="InterPro" id="IPR025726">
    <property type="entry name" value="SopA-like_central"/>
</dbReference>
<dbReference type="NCBIfam" id="NF011904">
    <property type="entry name" value="PRK15377.1"/>
    <property type="match status" value="1"/>
</dbReference>
<dbReference type="Pfam" id="PF13981">
    <property type="entry name" value="SopA"/>
    <property type="match status" value="1"/>
</dbReference>
<dbReference type="Pfam" id="PF13979">
    <property type="entry name" value="SopA_C"/>
    <property type="match status" value="1"/>
</dbReference>
<dbReference type="SUPFAM" id="SSF141571">
    <property type="entry name" value="Pentapeptide repeat-like"/>
    <property type="match status" value="1"/>
</dbReference>